<gene>
    <name type="primary">TMEM102</name>
</gene>
<protein>
    <recommendedName>
        <fullName>Transmembrane protein 102</fullName>
    </recommendedName>
</protein>
<sequence length="512" mass="54641">MASAVWGNAPWWSPPPPAPARPLTDIDFCSGAQLQELTQLIQELGVQESWNDGPKPGPDLLQAKDFVFSLLSLIHRRDPRFPPQTELLLLRGGIREGSLDLGPAPLGPYTRGPHYDAGFTLLVPVFSLDGTGQELQLDMRSCYAWLCLPEQVRGTSVREAWQDCLGPPVPGGRDWIHPTDSREGPRDPQSSVDQPHSDIIEPEAHESLEKSPSNVSVPESPQQNLTDIGFPSLSEETNDDVTKAADVSPGPQPSEAREAWPTLCPAQVAAWFFASLAAVAESLFPVPGAPRLVHAARHAGFTTILLATPGPPRRLLLFDLIPVVSVAGWPQGARSHSWAGPLASESSSFYLVPGGGGQTERPGASGWQLCFARQELALKARIPTPLLQAHAAAQALLRPLVAGTRAAAPYLLRTLLYWACERLPALYLARPENAGACCLGLLDELGRVLEARTLPHYFLSGQKLRAGDGASSLLGALALLRGDPARALRAAVEEAKAARKGGGLAGVGAGSH</sequence>
<reference key="1">
    <citation type="submission" date="2006-05" db="EMBL/GenBank/DDBJ databases">
        <authorList>
            <consortium name="NIH - Mammalian Gene Collection (MGC) project"/>
        </authorList>
    </citation>
    <scope>NUCLEOTIDE SEQUENCE [LARGE SCALE MRNA]</scope>
    <source>
        <strain>Hereford</strain>
        <tissue>Ascending colon</tissue>
    </source>
</reference>
<dbReference type="EMBL" id="BC116075">
    <property type="protein sequence ID" value="AAI16076.1"/>
    <property type="molecule type" value="mRNA"/>
</dbReference>
<dbReference type="RefSeq" id="NP_001068812.1">
    <property type="nucleotide sequence ID" value="NM_001075344.1"/>
</dbReference>
<dbReference type="RefSeq" id="XP_005220257.1">
    <property type="nucleotide sequence ID" value="XM_005220200.3"/>
</dbReference>
<dbReference type="RefSeq" id="XP_010814202.1">
    <property type="nucleotide sequence ID" value="XM_010815900.4"/>
</dbReference>
<dbReference type="SMR" id="Q1LZD1"/>
<dbReference type="FunCoup" id="Q1LZD1">
    <property type="interactions" value="29"/>
</dbReference>
<dbReference type="STRING" id="9913.ENSBTAP00000063464"/>
<dbReference type="PaxDb" id="9913-ENSBTAP00000025621"/>
<dbReference type="Ensembl" id="ENSBTAT00000025621.5">
    <property type="protein sequence ID" value="ENSBTAP00000025621.3"/>
    <property type="gene ID" value="ENSBTAG00000031737.3"/>
</dbReference>
<dbReference type="GeneID" id="508014"/>
<dbReference type="KEGG" id="bta:508014"/>
<dbReference type="CTD" id="284114"/>
<dbReference type="VEuPathDB" id="HostDB:ENSBTAG00000031737"/>
<dbReference type="VGNC" id="VGNC:35943">
    <property type="gene designation" value="TMEM102"/>
</dbReference>
<dbReference type="eggNOG" id="KOG3963">
    <property type="taxonomic scope" value="Eukaryota"/>
</dbReference>
<dbReference type="GeneTree" id="ENSGT01050000244976"/>
<dbReference type="HOGENOM" id="CLU_041150_0_0_1"/>
<dbReference type="InParanoid" id="Q1LZD1"/>
<dbReference type="OMA" id="GAPWWGP"/>
<dbReference type="OrthoDB" id="269173at2759"/>
<dbReference type="TreeFam" id="TF329089"/>
<dbReference type="Proteomes" id="UP000009136">
    <property type="component" value="Chromosome 19"/>
</dbReference>
<dbReference type="Bgee" id="ENSBTAG00000031737">
    <property type="expression patterns" value="Expressed in digestive system secreted substance and 75 other cell types or tissues"/>
</dbReference>
<dbReference type="GO" id="GO:0009986">
    <property type="term" value="C:cell surface"/>
    <property type="evidence" value="ECO:0007669"/>
    <property type="project" value="Ensembl"/>
</dbReference>
<dbReference type="GO" id="GO:0005739">
    <property type="term" value="C:mitochondrion"/>
    <property type="evidence" value="ECO:0007669"/>
    <property type="project" value="GOC"/>
</dbReference>
<dbReference type="GO" id="GO:0005886">
    <property type="term" value="C:plasma membrane"/>
    <property type="evidence" value="ECO:0007669"/>
    <property type="project" value="UniProtKB-SubCell"/>
</dbReference>
<dbReference type="GO" id="GO:0032991">
    <property type="term" value="C:protein-containing complex"/>
    <property type="evidence" value="ECO:0007669"/>
    <property type="project" value="Ensembl"/>
</dbReference>
<dbReference type="GO" id="GO:0006915">
    <property type="term" value="P:apoptotic process"/>
    <property type="evidence" value="ECO:0007669"/>
    <property type="project" value="UniProtKB-KW"/>
</dbReference>
<dbReference type="GO" id="GO:0045785">
    <property type="term" value="P:positive regulation of cell adhesion"/>
    <property type="evidence" value="ECO:0007669"/>
    <property type="project" value="Ensembl"/>
</dbReference>
<dbReference type="GO" id="GO:0010820">
    <property type="term" value="P:positive regulation of T cell chemotaxis"/>
    <property type="evidence" value="ECO:0007669"/>
    <property type="project" value="Ensembl"/>
</dbReference>
<dbReference type="GO" id="GO:1901028">
    <property type="term" value="P:regulation of mitochondrial outer membrane permeabilization involved in apoptotic signaling pathway"/>
    <property type="evidence" value="ECO:0007669"/>
    <property type="project" value="Ensembl"/>
</dbReference>
<dbReference type="GO" id="GO:0034097">
    <property type="term" value="P:response to cytokine"/>
    <property type="evidence" value="ECO:0007669"/>
    <property type="project" value="Ensembl"/>
</dbReference>
<dbReference type="GO" id="GO:0007165">
    <property type="term" value="P:signal transduction"/>
    <property type="evidence" value="ECO:0007669"/>
    <property type="project" value="Ensembl"/>
</dbReference>
<dbReference type="Gene3D" id="1.10.1410.40">
    <property type="match status" value="1"/>
</dbReference>
<dbReference type="InterPro" id="IPR024810">
    <property type="entry name" value="MAB21L/cGLR"/>
</dbReference>
<dbReference type="PANTHER" id="PTHR10656">
    <property type="entry name" value="CELL FATE DETERMINING PROTEIN MAB21-RELATED"/>
    <property type="match status" value="1"/>
</dbReference>
<dbReference type="PANTHER" id="PTHR10656:SF48">
    <property type="entry name" value="TRANSMEMBRANE PROTEIN 102"/>
    <property type="match status" value="1"/>
</dbReference>
<dbReference type="SMART" id="SM01265">
    <property type="entry name" value="Mab-21"/>
    <property type="match status" value="1"/>
</dbReference>
<organism>
    <name type="scientific">Bos taurus</name>
    <name type="common">Bovine</name>
    <dbReference type="NCBI Taxonomy" id="9913"/>
    <lineage>
        <taxon>Eukaryota</taxon>
        <taxon>Metazoa</taxon>
        <taxon>Chordata</taxon>
        <taxon>Craniata</taxon>
        <taxon>Vertebrata</taxon>
        <taxon>Euteleostomi</taxon>
        <taxon>Mammalia</taxon>
        <taxon>Eutheria</taxon>
        <taxon>Laurasiatheria</taxon>
        <taxon>Artiodactyla</taxon>
        <taxon>Ruminantia</taxon>
        <taxon>Pecora</taxon>
        <taxon>Bovidae</taxon>
        <taxon>Bovinae</taxon>
        <taxon>Bos</taxon>
    </lineage>
</organism>
<comment type="function">
    <text evidence="1">Selectively involved in CSF2 deprivation-induced apoptosis via a mitochondria-dependent pathway.</text>
</comment>
<comment type="subunit">
    <text evidence="1">Interacts with CSF2RB; this interaction occurs preferentially in the absence of CSF2.</text>
</comment>
<comment type="subcellular location">
    <subcellularLocation>
        <location evidence="1">Cell membrane</location>
        <topology evidence="1">Single-pass membrane protein</topology>
    </subcellularLocation>
    <text evidence="1">Also located in intracellular compartments.</text>
</comment>
<proteinExistence type="evidence at transcript level"/>
<accession>Q1LZD1</accession>
<name>TM102_BOVIN</name>
<keyword id="KW-0053">Apoptosis</keyword>
<keyword id="KW-1003">Cell membrane</keyword>
<keyword id="KW-0472">Membrane</keyword>
<keyword id="KW-1185">Reference proteome</keyword>
<keyword id="KW-0812">Transmembrane</keyword>
<keyword id="KW-1133">Transmembrane helix</keyword>
<evidence type="ECO:0000250" key="1"/>
<evidence type="ECO:0000255" key="2"/>
<evidence type="ECO:0000256" key="3">
    <source>
        <dbReference type="SAM" id="MobiDB-lite"/>
    </source>
</evidence>
<feature type="chain" id="PRO_0000263647" description="Transmembrane protein 102">
    <location>
        <begin position="1"/>
        <end position="512"/>
    </location>
</feature>
<feature type="topological domain" description="Extracellular" evidence="2">
    <location>
        <begin position="1"/>
        <end position="267"/>
    </location>
</feature>
<feature type="transmembrane region" description="Helical" evidence="2">
    <location>
        <begin position="268"/>
        <end position="284"/>
    </location>
</feature>
<feature type="topological domain" description="Cytoplasmic" evidence="2">
    <location>
        <begin position="285"/>
        <end position="512"/>
    </location>
</feature>
<feature type="region of interest" description="Disordered" evidence="3">
    <location>
        <begin position="168"/>
        <end position="258"/>
    </location>
</feature>
<feature type="compositionally biased region" description="Basic and acidic residues" evidence="3">
    <location>
        <begin position="174"/>
        <end position="186"/>
    </location>
</feature>
<feature type="compositionally biased region" description="Basic and acidic residues" evidence="3">
    <location>
        <begin position="195"/>
        <end position="209"/>
    </location>
</feature>
<feature type="compositionally biased region" description="Polar residues" evidence="3">
    <location>
        <begin position="210"/>
        <end position="226"/>
    </location>
</feature>